<organism>
    <name type="scientific">Campylobacter hominis (strain ATCC BAA-381 / DSM 21671 / CCUG 45161 / LMG 19568 / NCTC 13146 / CH001A)</name>
    <dbReference type="NCBI Taxonomy" id="360107"/>
    <lineage>
        <taxon>Bacteria</taxon>
        <taxon>Pseudomonadati</taxon>
        <taxon>Campylobacterota</taxon>
        <taxon>Epsilonproteobacteria</taxon>
        <taxon>Campylobacterales</taxon>
        <taxon>Campylobacteraceae</taxon>
        <taxon>Campylobacter</taxon>
    </lineage>
</organism>
<keyword id="KW-1185">Reference proteome</keyword>
<keyword id="KW-0687">Ribonucleoprotein</keyword>
<keyword id="KW-0689">Ribosomal protein</keyword>
<gene>
    <name evidence="1" type="primary">rpsP</name>
    <name type="ordered locus">CHAB381_0557</name>
</gene>
<accession>A7I0V4</accession>
<name>RS16_CAMHC</name>
<feature type="chain" id="PRO_1000049234" description="Small ribosomal subunit protein bS16">
    <location>
        <begin position="1"/>
        <end position="75"/>
    </location>
</feature>
<reference key="1">
    <citation type="submission" date="2007-07" db="EMBL/GenBank/DDBJ databases">
        <title>Complete genome sequence of Campylobacter hominis ATCC BAA-381, a commensal isolated from the human gastrointestinal tract.</title>
        <authorList>
            <person name="Fouts D.E."/>
            <person name="Mongodin E.F."/>
            <person name="Puiu D."/>
            <person name="Sebastian Y."/>
            <person name="Miller W.G."/>
            <person name="Mandrell R.E."/>
            <person name="Nelson K.E."/>
        </authorList>
    </citation>
    <scope>NUCLEOTIDE SEQUENCE [LARGE SCALE GENOMIC DNA]</scope>
    <source>
        <strain>ATCC BAA-381 / DSM 21671 / CCUG 45161 / LMG 19568 / NCTC 13146 / CH001A</strain>
    </source>
</reference>
<sequence length="75" mass="8800">MATVVRLTRIGRKKSPFYRIVVTDSRKRRDSGFIETIGYYNPRMEEELKFDADRLAYWKKVGAKVSDRVAKITSK</sequence>
<proteinExistence type="inferred from homology"/>
<protein>
    <recommendedName>
        <fullName evidence="1">Small ribosomal subunit protein bS16</fullName>
    </recommendedName>
    <alternativeName>
        <fullName evidence="2">30S ribosomal protein S16</fullName>
    </alternativeName>
</protein>
<evidence type="ECO:0000255" key="1">
    <source>
        <dbReference type="HAMAP-Rule" id="MF_00385"/>
    </source>
</evidence>
<evidence type="ECO:0000305" key="2"/>
<comment type="similarity">
    <text evidence="1">Belongs to the bacterial ribosomal protein bS16 family.</text>
</comment>
<dbReference type="EMBL" id="CP000776">
    <property type="protein sequence ID" value="ABS50885.1"/>
    <property type="molecule type" value="Genomic_DNA"/>
</dbReference>
<dbReference type="RefSeq" id="WP_012108432.1">
    <property type="nucleotide sequence ID" value="NC_009714.1"/>
</dbReference>
<dbReference type="SMR" id="A7I0V4"/>
<dbReference type="STRING" id="360107.CHAB381_0557"/>
<dbReference type="KEGG" id="cha:CHAB381_0557"/>
<dbReference type="eggNOG" id="COG0228">
    <property type="taxonomic scope" value="Bacteria"/>
</dbReference>
<dbReference type="HOGENOM" id="CLU_100590_5_1_7"/>
<dbReference type="OrthoDB" id="9807878at2"/>
<dbReference type="Proteomes" id="UP000002407">
    <property type="component" value="Chromosome"/>
</dbReference>
<dbReference type="GO" id="GO:0005737">
    <property type="term" value="C:cytoplasm"/>
    <property type="evidence" value="ECO:0007669"/>
    <property type="project" value="UniProtKB-ARBA"/>
</dbReference>
<dbReference type="GO" id="GO:0015935">
    <property type="term" value="C:small ribosomal subunit"/>
    <property type="evidence" value="ECO:0007669"/>
    <property type="project" value="TreeGrafter"/>
</dbReference>
<dbReference type="GO" id="GO:0003735">
    <property type="term" value="F:structural constituent of ribosome"/>
    <property type="evidence" value="ECO:0007669"/>
    <property type="project" value="InterPro"/>
</dbReference>
<dbReference type="GO" id="GO:0006412">
    <property type="term" value="P:translation"/>
    <property type="evidence" value="ECO:0007669"/>
    <property type="project" value="UniProtKB-UniRule"/>
</dbReference>
<dbReference type="Gene3D" id="3.30.1320.10">
    <property type="match status" value="1"/>
</dbReference>
<dbReference type="HAMAP" id="MF_00385">
    <property type="entry name" value="Ribosomal_bS16"/>
    <property type="match status" value="1"/>
</dbReference>
<dbReference type="InterPro" id="IPR000307">
    <property type="entry name" value="Ribosomal_bS16"/>
</dbReference>
<dbReference type="InterPro" id="IPR020592">
    <property type="entry name" value="Ribosomal_bS16_CS"/>
</dbReference>
<dbReference type="InterPro" id="IPR023803">
    <property type="entry name" value="Ribosomal_bS16_dom_sf"/>
</dbReference>
<dbReference type="NCBIfam" id="TIGR00002">
    <property type="entry name" value="S16"/>
    <property type="match status" value="1"/>
</dbReference>
<dbReference type="PANTHER" id="PTHR12919">
    <property type="entry name" value="30S RIBOSOMAL PROTEIN S16"/>
    <property type="match status" value="1"/>
</dbReference>
<dbReference type="PANTHER" id="PTHR12919:SF20">
    <property type="entry name" value="SMALL RIBOSOMAL SUBUNIT PROTEIN BS16M"/>
    <property type="match status" value="1"/>
</dbReference>
<dbReference type="Pfam" id="PF00886">
    <property type="entry name" value="Ribosomal_S16"/>
    <property type="match status" value="1"/>
</dbReference>
<dbReference type="SUPFAM" id="SSF54565">
    <property type="entry name" value="Ribosomal protein S16"/>
    <property type="match status" value="1"/>
</dbReference>
<dbReference type="PROSITE" id="PS00732">
    <property type="entry name" value="RIBOSOMAL_S16"/>
    <property type="match status" value="1"/>
</dbReference>